<evidence type="ECO:0000255" key="1">
    <source>
        <dbReference type="HAMAP-Rule" id="MF_01238"/>
    </source>
</evidence>
<evidence type="ECO:0000305" key="2"/>
<accession>Q8ZCH3</accession>
<accession>Q0WCQ0</accession>
<name>NANT_YERPE</name>
<feature type="chain" id="PRO_0000050318" description="Sialic acid transporter NanT">
    <location>
        <begin position="1"/>
        <end position="510"/>
    </location>
</feature>
<feature type="transmembrane region" description="Helical" evidence="1">
    <location>
        <begin position="35"/>
        <end position="55"/>
    </location>
</feature>
<feature type="transmembrane region" description="Helical" evidence="1">
    <location>
        <begin position="72"/>
        <end position="92"/>
    </location>
</feature>
<feature type="transmembrane region" description="Helical" evidence="1">
    <location>
        <begin position="99"/>
        <end position="119"/>
    </location>
</feature>
<feature type="transmembrane region" description="Helical" evidence="1">
    <location>
        <begin position="120"/>
        <end position="140"/>
    </location>
</feature>
<feature type="transmembrane region" description="Helical" evidence="1">
    <location>
        <begin position="158"/>
        <end position="178"/>
    </location>
</feature>
<feature type="transmembrane region" description="Helical" evidence="1">
    <location>
        <begin position="180"/>
        <end position="200"/>
    </location>
</feature>
<feature type="transmembrane region" description="Helical" evidence="1">
    <location>
        <begin position="240"/>
        <end position="260"/>
    </location>
</feature>
<feature type="transmembrane region" description="Helical" evidence="1">
    <location>
        <begin position="262"/>
        <end position="282"/>
    </location>
</feature>
<feature type="transmembrane region" description="Helical" evidence="1">
    <location>
        <begin position="295"/>
        <end position="315"/>
    </location>
</feature>
<feature type="transmembrane region" description="Helical" evidence="1">
    <location>
        <begin position="330"/>
        <end position="350"/>
    </location>
</feature>
<feature type="transmembrane region" description="Helical" evidence="1">
    <location>
        <begin position="371"/>
        <end position="391"/>
    </location>
</feature>
<feature type="transmembrane region" description="Helical" evidence="1">
    <location>
        <begin position="392"/>
        <end position="412"/>
    </location>
</feature>
<feature type="transmembrane region" description="Helical" evidence="1">
    <location>
        <begin position="418"/>
        <end position="438"/>
    </location>
</feature>
<feature type="transmembrane region" description="Helical" evidence="1">
    <location>
        <begin position="449"/>
        <end position="469"/>
    </location>
</feature>
<feature type="sequence conflict" description="In Ref. 3; AAS62832." evidence="2" ref="3">
    <original>L</original>
    <variation>P</variation>
    <location>
        <position position="182"/>
    </location>
</feature>
<reference key="1">
    <citation type="journal article" date="2001" name="Nature">
        <title>Genome sequence of Yersinia pestis, the causative agent of plague.</title>
        <authorList>
            <person name="Parkhill J."/>
            <person name="Wren B.W."/>
            <person name="Thomson N.R."/>
            <person name="Titball R.W."/>
            <person name="Holden M.T.G."/>
            <person name="Prentice M.B."/>
            <person name="Sebaihia M."/>
            <person name="James K.D."/>
            <person name="Churcher C.M."/>
            <person name="Mungall K.L."/>
            <person name="Baker S."/>
            <person name="Basham D."/>
            <person name="Bentley S.D."/>
            <person name="Brooks K."/>
            <person name="Cerdeno-Tarraga A.-M."/>
            <person name="Chillingworth T."/>
            <person name="Cronin A."/>
            <person name="Davies R.M."/>
            <person name="Davis P."/>
            <person name="Dougan G."/>
            <person name="Feltwell T."/>
            <person name="Hamlin N."/>
            <person name="Holroyd S."/>
            <person name="Jagels K."/>
            <person name="Karlyshev A.V."/>
            <person name="Leather S."/>
            <person name="Moule S."/>
            <person name="Oyston P.C.F."/>
            <person name="Quail M.A."/>
            <person name="Rutherford K.M."/>
            <person name="Simmonds M."/>
            <person name="Skelton J."/>
            <person name="Stevens K."/>
            <person name="Whitehead S."/>
            <person name="Barrell B.G."/>
        </authorList>
    </citation>
    <scope>NUCLEOTIDE SEQUENCE [LARGE SCALE GENOMIC DNA]</scope>
    <source>
        <strain>CO-92 / Biovar Orientalis</strain>
    </source>
</reference>
<reference key="2">
    <citation type="journal article" date="2002" name="J. Bacteriol.">
        <title>Genome sequence of Yersinia pestis KIM.</title>
        <authorList>
            <person name="Deng W."/>
            <person name="Burland V."/>
            <person name="Plunkett G. III"/>
            <person name="Boutin A."/>
            <person name="Mayhew G.F."/>
            <person name="Liss P."/>
            <person name="Perna N.T."/>
            <person name="Rose D.J."/>
            <person name="Mau B."/>
            <person name="Zhou S."/>
            <person name="Schwartz D.C."/>
            <person name="Fetherston J.D."/>
            <person name="Lindler L.E."/>
            <person name="Brubaker R.R."/>
            <person name="Plano G.V."/>
            <person name="Straley S.C."/>
            <person name="McDonough K.A."/>
            <person name="Nilles M.L."/>
            <person name="Matson J.S."/>
            <person name="Blattner F.R."/>
            <person name="Perry R.D."/>
        </authorList>
    </citation>
    <scope>NUCLEOTIDE SEQUENCE [LARGE SCALE GENOMIC DNA]</scope>
    <source>
        <strain>KIM10+ / Biovar Mediaevalis</strain>
    </source>
</reference>
<reference key="3">
    <citation type="journal article" date="2004" name="DNA Res.">
        <title>Complete genome sequence of Yersinia pestis strain 91001, an isolate avirulent to humans.</title>
        <authorList>
            <person name="Song Y."/>
            <person name="Tong Z."/>
            <person name="Wang J."/>
            <person name="Wang L."/>
            <person name="Guo Z."/>
            <person name="Han Y."/>
            <person name="Zhang J."/>
            <person name="Pei D."/>
            <person name="Zhou D."/>
            <person name="Qin H."/>
            <person name="Pang X."/>
            <person name="Han Y."/>
            <person name="Zhai J."/>
            <person name="Li M."/>
            <person name="Cui B."/>
            <person name="Qi Z."/>
            <person name="Jin L."/>
            <person name="Dai R."/>
            <person name="Chen F."/>
            <person name="Li S."/>
            <person name="Ye C."/>
            <person name="Du Z."/>
            <person name="Lin W."/>
            <person name="Wang J."/>
            <person name="Yu J."/>
            <person name="Yang H."/>
            <person name="Wang J."/>
            <person name="Huang P."/>
            <person name="Yang R."/>
        </authorList>
    </citation>
    <scope>NUCLEOTIDE SEQUENCE [LARGE SCALE GENOMIC DNA]</scope>
    <source>
        <strain>91001 / Biovar Mediaevalis</strain>
    </source>
</reference>
<dbReference type="EMBL" id="AL590842">
    <property type="protein sequence ID" value="CAL21619.1"/>
    <property type="molecule type" value="Genomic_DNA"/>
</dbReference>
<dbReference type="EMBL" id="AE009952">
    <property type="protein sequence ID" value="AAM85036.1"/>
    <property type="molecule type" value="Genomic_DNA"/>
</dbReference>
<dbReference type="EMBL" id="AE017042">
    <property type="protein sequence ID" value="AAS62832.1"/>
    <property type="molecule type" value="Genomic_DNA"/>
</dbReference>
<dbReference type="PIR" id="AH0366">
    <property type="entry name" value="AH0366"/>
</dbReference>
<dbReference type="RefSeq" id="WP_002208513.1">
    <property type="nucleotide sequence ID" value="NZ_WUCM01000010.1"/>
</dbReference>
<dbReference type="RefSeq" id="YP_002347938.1">
    <property type="nucleotide sequence ID" value="NC_003143.1"/>
</dbReference>
<dbReference type="SMR" id="Q8ZCH3"/>
<dbReference type="IntAct" id="Q8ZCH3">
    <property type="interactions" value="1"/>
</dbReference>
<dbReference type="STRING" id="214092.YPO3016"/>
<dbReference type="PaxDb" id="214092-YPO3016"/>
<dbReference type="DNASU" id="1146412"/>
<dbReference type="EnsemblBacteria" id="AAS62832">
    <property type="protein sequence ID" value="AAS62832"/>
    <property type="gene ID" value="YP_2640"/>
</dbReference>
<dbReference type="KEGG" id="ype:YPO3016"/>
<dbReference type="KEGG" id="ypk:y1465"/>
<dbReference type="KEGG" id="ypm:YP_2640"/>
<dbReference type="PATRIC" id="fig|214092.21.peg.3470"/>
<dbReference type="eggNOG" id="COG2814">
    <property type="taxonomic scope" value="Bacteria"/>
</dbReference>
<dbReference type="HOGENOM" id="CLU_001265_46_8_6"/>
<dbReference type="OMA" id="SDITWGI"/>
<dbReference type="OrthoDB" id="4474610at2"/>
<dbReference type="Proteomes" id="UP000000815">
    <property type="component" value="Chromosome"/>
</dbReference>
<dbReference type="Proteomes" id="UP000001019">
    <property type="component" value="Chromosome"/>
</dbReference>
<dbReference type="Proteomes" id="UP000002490">
    <property type="component" value="Chromosome"/>
</dbReference>
<dbReference type="GO" id="GO:0005886">
    <property type="term" value="C:plasma membrane"/>
    <property type="evidence" value="ECO:0000318"/>
    <property type="project" value="GO_Central"/>
</dbReference>
<dbReference type="GO" id="GO:0046943">
    <property type="term" value="F:carboxylic acid transmembrane transporter activity"/>
    <property type="evidence" value="ECO:0000318"/>
    <property type="project" value="GO_Central"/>
</dbReference>
<dbReference type="GO" id="GO:0015538">
    <property type="term" value="F:sialic acid:proton symporter activity"/>
    <property type="evidence" value="ECO:0007669"/>
    <property type="project" value="UniProtKB-UniRule"/>
</dbReference>
<dbReference type="GO" id="GO:0046942">
    <property type="term" value="P:carboxylic acid transport"/>
    <property type="evidence" value="ECO:0000318"/>
    <property type="project" value="GO_Central"/>
</dbReference>
<dbReference type="CDD" id="cd17316">
    <property type="entry name" value="MFS_SV2_like"/>
    <property type="match status" value="1"/>
</dbReference>
<dbReference type="FunFam" id="1.20.1250.20:FF:000027">
    <property type="entry name" value="Sialic acid transporter NanT"/>
    <property type="match status" value="1"/>
</dbReference>
<dbReference type="FunFam" id="1.20.1250.20:FF:000038">
    <property type="entry name" value="Sialic acid transporter NanT"/>
    <property type="match status" value="1"/>
</dbReference>
<dbReference type="Gene3D" id="1.20.1250.20">
    <property type="entry name" value="MFS general substrate transporter like domains"/>
    <property type="match status" value="2"/>
</dbReference>
<dbReference type="HAMAP" id="MF_01238">
    <property type="entry name" value="MFS_NanT"/>
    <property type="match status" value="1"/>
</dbReference>
<dbReference type="InterPro" id="IPR011701">
    <property type="entry name" value="MFS"/>
</dbReference>
<dbReference type="InterPro" id="IPR020846">
    <property type="entry name" value="MFS_dom"/>
</dbReference>
<dbReference type="InterPro" id="IPR036259">
    <property type="entry name" value="MFS_trans_sf"/>
</dbReference>
<dbReference type="InterPro" id="IPR004742">
    <property type="entry name" value="SA_transporter"/>
</dbReference>
<dbReference type="NCBIfam" id="NF003024">
    <property type="entry name" value="PRK03893.1"/>
    <property type="match status" value="1"/>
</dbReference>
<dbReference type="PANTHER" id="PTHR23508">
    <property type="entry name" value="CARBOXYLIC ACID TRANSPORTER PROTEIN HOMOLOG"/>
    <property type="match status" value="1"/>
</dbReference>
<dbReference type="PANTHER" id="PTHR23508:SF3">
    <property type="entry name" value="SIALIC ACID TRANSPORTER NANT"/>
    <property type="match status" value="1"/>
</dbReference>
<dbReference type="Pfam" id="PF07690">
    <property type="entry name" value="MFS_1"/>
    <property type="match status" value="1"/>
</dbReference>
<dbReference type="SUPFAM" id="SSF103473">
    <property type="entry name" value="MFS general substrate transporter"/>
    <property type="match status" value="1"/>
</dbReference>
<dbReference type="PROSITE" id="PS50850">
    <property type="entry name" value="MFS"/>
    <property type="match status" value="1"/>
</dbReference>
<comment type="function">
    <text evidence="1">Catalyzes the proton-dependent transport of sialic acid.</text>
</comment>
<comment type="catalytic activity">
    <reaction evidence="1">
        <text>N-acetylneuraminate(in) + H(+)(in) = N-acetylneuraminate(out) + H(+)(out)</text>
        <dbReference type="Rhea" id="RHEA:28987"/>
        <dbReference type="ChEBI" id="CHEBI:15378"/>
        <dbReference type="ChEBI" id="CHEBI:35418"/>
    </reaction>
</comment>
<comment type="subcellular location">
    <subcellularLocation>
        <location evidence="1">Cell inner membrane</location>
        <topology evidence="1">Multi-pass membrane protein</topology>
    </subcellularLocation>
</comment>
<comment type="similarity">
    <text evidence="1">Belongs to the major facilitator superfamily. Sialate:H(+) symporter (SHS) (TC 2.A.1.12) family.</text>
</comment>
<sequence>MSISVGPSREDKPLSGGAKPPRWYKQLTPAQWKAFVAAWIGYALDGFDFVLITLVLTDIKQEFGLTLIQATSLISAAFISRWFGGLVLGAMGDRYGRKLAMITSIVLFSFGTLACGLAPGYTTLFIARLIIGIGMAGEYGSSSTYVMESWPKNMRNKASGFLISGFSIGAVLAAQAYSYVVLAFGWRMLFYIGLLPIIFALWLRKNLPEAEDWEKAQSKQKKGKQVTDRNMVDILYRSHLSYLNIGLTIFAAVSLYLCFTGMVSTLLVVVLGILCAAIFIYFMVQTSGDRWPTGVMLMVVVFCAFLYSWPIQALLPTYLKMDLGYDPHTVGNILFFSGFGAAVGCCVGGFLGDWLGTRKAYVTSLLISQLLIIPLFAIQGSSILFLGGLLFLQQMLGQGIAGLLPKLLGGYFDTEQRAAGLGFTYNVGALGGALAPILGASIAQHLSLGTALGSLSFSLTFVVILLIGFDMPSRVQRWVRPSGLRMVDAIDGKPFSGAITAQHARVVTQK</sequence>
<keyword id="KW-0997">Cell inner membrane</keyword>
<keyword id="KW-1003">Cell membrane</keyword>
<keyword id="KW-0472">Membrane</keyword>
<keyword id="KW-1185">Reference proteome</keyword>
<keyword id="KW-0762">Sugar transport</keyword>
<keyword id="KW-0812">Transmembrane</keyword>
<keyword id="KW-1133">Transmembrane helix</keyword>
<keyword id="KW-0813">Transport</keyword>
<organism>
    <name type="scientific">Yersinia pestis</name>
    <dbReference type="NCBI Taxonomy" id="632"/>
    <lineage>
        <taxon>Bacteria</taxon>
        <taxon>Pseudomonadati</taxon>
        <taxon>Pseudomonadota</taxon>
        <taxon>Gammaproteobacteria</taxon>
        <taxon>Enterobacterales</taxon>
        <taxon>Yersiniaceae</taxon>
        <taxon>Yersinia</taxon>
    </lineage>
</organism>
<proteinExistence type="inferred from homology"/>
<gene>
    <name evidence="1" type="primary">nanT</name>
    <name type="ordered locus">YPO3016</name>
    <name type="ordered locus">y1465</name>
    <name type="ordered locus">YP_2640</name>
</gene>
<protein>
    <recommendedName>
        <fullName evidence="1">Sialic acid transporter NanT</fullName>
    </recommendedName>
    <alternativeName>
        <fullName evidence="1">Sialic acid permease</fullName>
    </alternativeName>
    <alternativeName>
        <fullName evidence="1">Sialic acid/H(+) symporter</fullName>
    </alternativeName>
</protein>